<reference key="1">
    <citation type="submission" date="2007-08" db="EMBL/GenBank/DDBJ databases">
        <title>Complete sequence of Thermotoga lettingae TMO.</title>
        <authorList>
            <consortium name="US DOE Joint Genome Institute"/>
            <person name="Copeland A."/>
            <person name="Lucas S."/>
            <person name="Lapidus A."/>
            <person name="Barry K."/>
            <person name="Glavina del Rio T."/>
            <person name="Dalin E."/>
            <person name="Tice H."/>
            <person name="Pitluck S."/>
            <person name="Foster B."/>
            <person name="Bruce D."/>
            <person name="Schmutz J."/>
            <person name="Larimer F."/>
            <person name="Land M."/>
            <person name="Hauser L."/>
            <person name="Kyrpides N."/>
            <person name="Mikhailova N."/>
            <person name="Nelson K."/>
            <person name="Gogarten J.P."/>
            <person name="Noll K."/>
            <person name="Richardson P."/>
        </authorList>
    </citation>
    <scope>NUCLEOTIDE SEQUENCE [LARGE SCALE GENOMIC DNA]</scope>
    <source>
        <strain>ATCC BAA-301 / DSM 14385 / NBRC 107922 / TMO</strain>
    </source>
</reference>
<name>PYRH_PSELT</name>
<feature type="chain" id="PRO_0000323976" description="Uridylate kinase">
    <location>
        <begin position="1"/>
        <end position="233"/>
    </location>
</feature>
<feature type="binding site" evidence="1">
    <location>
        <begin position="8"/>
        <end position="11"/>
    </location>
    <ligand>
        <name>ATP</name>
        <dbReference type="ChEBI" id="CHEBI:30616"/>
    </ligand>
</feature>
<feature type="binding site" evidence="1">
    <location>
        <position position="51"/>
    </location>
    <ligand>
        <name>ATP</name>
        <dbReference type="ChEBI" id="CHEBI:30616"/>
    </ligand>
</feature>
<feature type="binding site" evidence="1">
    <location>
        <position position="55"/>
    </location>
    <ligand>
        <name>ATP</name>
        <dbReference type="ChEBI" id="CHEBI:30616"/>
    </ligand>
</feature>
<feature type="binding site" evidence="1">
    <location>
        <position position="68"/>
    </location>
    <ligand>
        <name>UMP</name>
        <dbReference type="ChEBI" id="CHEBI:57865"/>
    </ligand>
</feature>
<feature type="binding site" evidence="1">
    <location>
        <begin position="129"/>
        <end position="136"/>
    </location>
    <ligand>
        <name>UMP</name>
        <dbReference type="ChEBI" id="CHEBI:57865"/>
    </ligand>
</feature>
<feature type="binding site" evidence="1">
    <location>
        <position position="156"/>
    </location>
    <ligand>
        <name>ATP</name>
        <dbReference type="ChEBI" id="CHEBI:30616"/>
    </ligand>
</feature>
<feature type="binding site" evidence="1">
    <location>
        <position position="162"/>
    </location>
    <ligand>
        <name>ATP</name>
        <dbReference type="ChEBI" id="CHEBI:30616"/>
    </ligand>
</feature>
<feature type="binding site" evidence="1">
    <location>
        <position position="165"/>
    </location>
    <ligand>
        <name>ATP</name>
        <dbReference type="ChEBI" id="CHEBI:30616"/>
    </ligand>
</feature>
<protein>
    <recommendedName>
        <fullName evidence="1">Uridylate kinase</fullName>
        <shortName evidence="1">UK</shortName>
        <ecNumber evidence="1">2.7.4.22</ecNumber>
    </recommendedName>
    <alternativeName>
        <fullName evidence="1">Uridine monophosphate kinase</fullName>
        <shortName evidence="1">UMP kinase</shortName>
        <shortName evidence="1">UMPK</shortName>
    </alternativeName>
</protein>
<organism>
    <name type="scientific">Pseudothermotoga lettingae (strain ATCC BAA-301 / DSM 14385 / NBRC 107922 / TMO)</name>
    <name type="common">Thermotoga lettingae</name>
    <dbReference type="NCBI Taxonomy" id="416591"/>
    <lineage>
        <taxon>Bacteria</taxon>
        <taxon>Thermotogati</taxon>
        <taxon>Thermotogota</taxon>
        <taxon>Thermotogae</taxon>
        <taxon>Thermotogales</taxon>
        <taxon>Thermotogaceae</taxon>
        <taxon>Pseudothermotoga</taxon>
    </lineage>
</organism>
<dbReference type="EC" id="2.7.4.22" evidence="1"/>
<dbReference type="EMBL" id="CP000812">
    <property type="protein sequence ID" value="ABV33382.1"/>
    <property type="molecule type" value="Genomic_DNA"/>
</dbReference>
<dbReference type="RefSeq" id="WP_012002863.1">
    <property type="nucleotide sequence ID" value="NZ_BSDV01000001.1"/>
</dbReference>
<dbReference type="SMR" id="A8F5E8"/>
<dbReference type="STRING" id="416591.Tlet_0816"/>
<dbReference type="KEGG" id="tle:Tlet_0816"/>
<dbReference type="eggNOG" id="COG0528">
    <property type="taxonomic scope" value="Bacteria"/>
</dbReference>
<dbReference type="HOGENOM" id="CLU_033861_0_0_0"/>
<dbReference type="OrthoDB" id="9807458at2"/>
<dbReference type="UniPathway" id="UPA00159">
    <property type="reaction ID" value="UER00275"/>
</dbReference>
<dbReference type="Proteomes" id="UP000002016">
    <property type="component" value="Chromosome"/>
</dbReference>
<dbReference type="GO" id="GO:0005737">
    <property type="term" value="C:cytoplasm"/>
    <property type="evidence" value="ECO:0007669"/>
    <property type="project" value="UniProtKB-SubCell"/>
</dbReference>
<dbReference type="GO" id="GO:0005524">
    <property type="term" value="F:ATP binding"/>
    <property type="evidence" value="ECO:0007669"/>
    <property type="project" value="UniProtKB-KW"/>
</dbReference>
<dbReference type="GO" id="GO:0033862">
    <property type="term" value="F:UMP kinase activity"/>
    <property type="evidence" value="ECO:0007669"/>
    <property type="project" value="UniProtKB-EC"/>
</dbReference>
<dbReference type="GO" id="GO:0044210">
    <property type="term" value="P:'de novo' CTP biosynthetic process"/>
    <property type="evidence" value="ECO:0007669"/>
    <property type="project" value="UniProtKB-UniRule"/>
</dbReference>
<dbReference type="GO" id="GO:0006225">
    <property type="term" value="P:UDP biosynthetic process"/>
    <property type="evidence" value="ECO:0007669"/>
    <property type="project" value="TreeGrafter"/>
</dbReference>
<dbReference type="CDD" id="cd04254">
    <property type="entry name" value="AAK_UMPK-PyrH-Ec"/>
    <property type="match status" value="1"/>
</dbReference>
<dbReference type="FunFam" id="3.40.1160.10:FF:000001">
    <property type="entry name" value="Uridylate kinase"/>
    <property type="match status" value="1"/>
</dbReference>
<dbReference type="Gene3D" id="3.40.1160.10">
    <property type="entry name" value="Acetylglutamate kinase-like"/>
    <property type="match status" value="1"/>
</dbReference>
<dbReference type="HAMAP" id="MF_01220_B">
    <property type="entry name" value="PyrH_B"/>
    <property type="match status" value="1"/>
</dbReference>
<dbReference type="InterPro" id="IPR036393">
    <property type="entry name" value="AceGlu_kinase-like_sf"/>
</dbReference>
<dbReference type="InterPro" id="IPR001048">
    <property type="entry name" value="Asp/Glu/Uridylate_kinase"/>
</dbReference>
<dbReference type="InterPro" id="IPR011817">
    <property type="entry name" value="Uridylate_kinase"/>
</dbReference>
<dbReference type="InterPro" id="IPR015963">
    <property type="entry name" value="Uridylate_kinase_bac"/>
</dbReference>
<dbReference type="NCBIfam" id="TIGR02075">
    <property type="entry name" value="pyrH_bact"/>
    <property type="match status" value="1"/>
</dbReference>
<dbReference type="PANTHER" id="PTHR42833">
    <property type="entry name" value="URIDYLATE KINASE"/>
    <property type="match status" value="1"/>
</dbReference>
<dbReference type="PANTHER" id="PTHR42833:SF4">
    <property type="entry name" value="URIDYLATE KINASE PUMPKIN, CHLOROPLASTIC"/>
    <property type="match status" value="1"/>
</dbReference>
<dbReference type="Pfam" id="PF00696">
    <property type="entry name" value="AA_kinase"/>
    <property type="match status" value="1"/>
</dbReference>
<dbReference type="PIRSF" id="PIRSF005650">
    <property type="entry name" value="Uridylate_kin"/>
    <property type="match status" value="1"/>
</dbReference>
<dbReference type="SUPFAM" id="SSF53633">
    <property type="entry name" value="Carbamate kinase-like"/>
    <property type="match status" value="1"/>
</dbReference>
<proteinExistence type="inferred from homology"/>
<comment type="function">
    <text evidence="1">Catalyzes the reversible phosphorylation of UMP to UDP.</text>
</comment>
<comment type="catalytic activity">
    <reaction evidence="1">
        <text>UMP + ATP = UDP + ADP</text>
        <dbReference type="Rhea" id="RHEA:24400"/>
        <dbReference type="ChEBI" id="CHEBI:30616"/>
        <dbReference type="ChEBI" id="CHEBI:57865"/>
        <dbReference type="ChEBI" id="CHEBI:58223"/>
        <dbReference type="ChEBI" id="CHEBI:456216"/>
        <dbReference type="EC" id="2.7.4.22"/>
    </reaction>
</comment>
<comment type="activity regulation">
    <text evidence="1">Inhibited by UTP.</text>
</comment>
<comment type="pathway">
    <text evidence="1">Pyrimidine metabolism; CTP biosynthesis via de novo pathway; UDP from UMP (UMPK route): step 1/1.</text>
</comment>
<comment type="subunit">
    <text evidence="1">Homohexamer.</text>
</comment>
<comment type="subcellular location">
    <subcellularLocation>
        <location evidence="1">Cytoplasm</location>
    </subcellularLocation>
</comment>
<comment type="similarity">
    <text evidence="1">Belongs to the UMP kinase family.</text>
</comment>
<sequence length="233" mass="25401">MYQRVLVKLSGEVMCGEGSRGFDQSNINYLVQQIAQIVDYGVNVGIVIGAGNIFRGEELSEIPHSLADQIGMLGTVINALYLKGSLQKVGIKCVVVSQVTSLPSIRPIHYDDINLYFDAGYVVIFAGGTSNPFFTTDTAAALRAVEMGANLLIKATKVDGIYDSDPKKNKSARKLDKISYYDAISRGLKVMDMEAFSICGRYKLPIVILNFFEDGSLLRAVRGEDVGSIIMPD</sequence>
<keyword id="KW-0067">ATP-binding</keyword>
<keyword id="KW-0963">Cytoplasm</keyword>
<keyword id="KW-0418">Kinase</keyword>
<keyword id="KW-0547">Nucleotide-binding</keyword>
<keyword id="KW-0665">Pyrimidine biosynthesis</keyword>
<keyword id="KW-1185">Reference proteome</keyword>
<keyword id="KW-0808">Transferase</keyword>
<accession>A8F5E8</accession>
<gene>
    <name evidence="1" type="primary">pyrH</name>
    <name type="ordered locus">Tlet_0816</name>
</gene>
<evidence type="ECO:0000255" key="1">
    <source>
        <dbReference type="HAMAP-Rule" id="MF_01220"/>
    </source>
</evidence>